<dbReference type="EC" id="2.3.1.-" evidence="6"/>
<dbReference type="EMBL" id="ADNJ02000001">
    <property type="protein sequence ID" value="EFY95969.1"/>
    <property type="molecule type" value="Genomic_DNA"/>
</dbReference>
<dbReference type="RefSeq" id="XP_007824811.1">
    <property type="nucleotide sequence ID" value="XM_007826620.1"/>
</dbReference>
<dbReference type="SMR" id="E9F8M3"/>
<dbReference type="GeneID" id="19262908"/>
<dbReference type="KEGG" id="maj:MAA_08622"/>
<dbReference type="HOGENOM" id="CLU_000022_1_1_1"/>
<dbReference type="OrthoDB" id="5334845at2759"/>
<dbReference type="Proteomes" id="UP000002498">
    <property type="component" value="Unassembled WGS sequence"/>
</dbReference>
<dbReference type="GO" id="GO:0004312">
    <property type="term" value="F:fatty acid synthase activity"/>
    <property type="evidence" value="ECO:0007669"/>
    <property type="project" value="TreeGrafter"/>
</dbReference>
<dbReference type="GO" id="GO:0016874">
    <property type="term" value="F:ligase activity"/>
    <property type="evidence" value="ECO:0007669"/>
    <property type="project" value="UniProtKB-KW"/>
</dbReference>
<dbReference type="GO" id="GO:0008168">
    <property type="term" value="F:methyltransferase activity"/>
    <property type="evidence" value="ECO:0007669"/>
    <property type="project" value="UniProtKB-KW"/>
</dbReference>
<dbReference type="GO" id="GO:0016491">
    <property type="term" value="F:oxidoreductase activity"/>
    <property type="evidence" value="ECO:0007669"/>
    <property type="project" value="UniProtKB-KW"/>
</dbReference>
<dbReference type="GO" id="GO:0031177">
    <property type="term" value="F:phosphopantetheine binding"/>
    <property type="evidence" value="ECO:0007669"/>
    <property type="project" value="InterPro"/>
</dbReference>
<dbReference type="GO" id="GO:0006633">
    <property type="term" value="P:fatty acid biosynthetic process"/>
    <property type="evidence" value="ECO:0007669"/>
    <property type="project" value="TreeGrafter"/>
</dbReference>
<dbReference type="GO" id="GO:0032259">
    <property type="term" value="P:methylation"/>
    <property type="evidence" value="ECO:0007669"/>
    <property type="project" value="UniProtKB-KW"/>
</dbReference>
<dbReference type="CDD" id="cd05930">
    <property type="entry name" value="A_NRPS"/>
    <property type="match status" value="1"/>
</dbReference>
<dbReference type="CDD" id="cd08956">
    <property type="entry name" value="KR_3_FAS_SDR_x"/>
    <property type="match status" value="1"/>
</dbReference>
<dbReference type="CDD" id="cd00833">
    <property type="entry name" value="PKS"/>
    <property type="match status" value="1"/>
</dbReference>
<dbReference type="FunFam" id="3.40.50.980:FF:000001">
    <property type="entry name" value="Non-ribosomal peptide synthetase"/>
    <property type="match status" value="1"/>
</dbReference>
<dbReference type="FunFam" id="3.40.47.10:FF:000019">
    <property type="entry name" value="Polyketide synthase type I"/>
    <property type="match status" value="1"/>
</dbReference>
<dbReference type="Gene3D" id="3.30.300.30">
    <property type="match status" value="1"/>
</dbReference>
<dbReference type="Gene3D" id="3.30.70.3290">
    <property type="match status" value="1"/>
</dbReference>
<dbReference type="Gene3D" id="3.40.47.10">
    <property type="match status" value="1"/>
</dbReference>
<dbReference type="Gene3D" id="3.40.50.980">
    <property type="match status" value="2"/>
</dbReference>
<dbReference type="Gene3D" id="1.10.1200.10">
    <property type="entry name" value="ACP-like"/>
    <property type="match status" value="2"/>
</dbReference>
<dbReference type="Gene3D" id="2.30.38.10">
    <property type="entry name" value="Luciferase, Domain 3"/>
    <property type="match status" value="1"/>
</dbReference>
<dbReference type="Gene3D" id="3.40.366.10">
    <property type="entry name" value="Malonyl-Coenzyme A Acyl Carrier Protein, domain 2"/>
    <property type="match status" value="1"/>
</dbReference>
<dbReference type="Gene3D" id="3.40.50.720">
    <property type="entry name" value="NAD(P)-binding Rossmann-like Domain"/>
    <property type="match status" value="2"/>
</dbReference>
<dbReference type="InterPro" id="IPR010071">
    <property type="entry name" value="AA_adenyl_dom"/>
</dbReference>
<dbReference type="InterPro" id="IPR001227">
    <property type="entry name" value="Ac_transferase_dom_sf"/>
</dbReference>
<dbReference type="InterPro" id="IPR036736">
    <property type="entry name" value="ACP-like_sf"/>
</dbReference>
<dbReference type="InterPro" id="IPR014043">
    <property type="entry name" value="Acyl_transferase_dom"/>
</dbReference>
<dbReference type="InterPro" id="IPR016035">
    <property type="entry name" value="Acyl_Trfase/lysoPLipase"/>
</dbReference>
<dbReference type="InterPro" id="IPR025110">
    <property type="entry name" value="AMP-bd_C"/>
</dbReference>
<dbReference type="InterPro" id="IPR045851">
    <property type="entry name" value="AMP-bd_C_sf"/>
</dbReference>
<dbReference type="InterPro" id="IPR020845">
    <property type="entry name" value="AMP-binding_CS"/>
</dbReference>
<dbReference type="InterPro" id="IPR000873">
    <property type="entry name" value="AMP-dep_synth/lig_dom"/>
</dbReference>
<dbReference type="InterPro" id="IPR013120">
    <property type="entry name" value="Far_NAD-bd"/>
</dbReference>
<dbReference type="InterPro" id="IPR014031">
    <property type="entry name" value="Ketoacyl_synth_C"/>
</dbReference>
<dbReference type="InterPro" id="IPR014030">
    <property type="entry name" value="Ketoacyl_synth_N"/>
</dbReference>
<dbReference type="InterPro" id="IPR016036">
    <property type="entry name" value="Malonyl_transacylase_ACP-bd"/>
</dbReference>
<dbReference type="InterPro" id="IPR036291">
    <property type="entry name" value="NAD(P)-bd_dom_sf"/>
</dbReference>
<dbReference type="InterPro" id="IPR032821">
    <property type="entry name" value="PKS_assoc"/>
</dbReference>
<dbReference type="InterPro" id="IPR020841">
    <property type="entry name" value="PKS_Beta-ketoAc_synthase_dom"/>
</dbReference>
<dbReference type="InterPro" id="IPR013968">
    <property type="entry name" value="PKS_KR"/>
</dbReference>
<dbReference type="InterPro" id="IPR050091">
    <property type="entry name" value="PKS_NRPS_Biosynth_Enz"/>
</dbReference>
<dbReference type="InterPro" id="IPR020806">
    <property type="entry name" value="PKS_PP-bd"/>
</dbReference>
<dbReference type="InterPro" id="IPR009081">
    <property type="entry name" value="PP-bd_ACP"/>
</dbReference>
<dbReference type="InterPro" id="IPR006162">
    <property type="entry name" value="Ppantetheine_attach_site"/>
</dbReference>
<dbReference type="InterPro" id="IPR010080">
    <property type="entry name" value="Thioester_reductase-like_dom"/>
</dbReference>
<dbReference type="InterPro" id="IPR016039">
    <property type="entry name" value="Thiolase-like"/>
</dbReference>
<dbReference type="NCBIfam" id="TIGR01733">
    <property type="entry name" value="AA-adenyl-dom"/>
    <property type="match status" value="1"/>
</dbReference>
<dbReference type="NCBIfam" id="TIGR01746">
    <property type="entry name" value="Thioester-redct"/>
    <property type="match status" value="1"/>
</dbReference>
<dbReference type="PANTHER" id="PTHR43775">
    <property type="entry name" value="FATTY ACID SYNTHASE"/>
    <property type="match status" value="1"/>
</dbReference>
<dbReference type="PANTHER" id="PTHR43775:SF51">
    <property type="entry name" value="INACTIVE PHENOLPHTHIOCEROL SYNTHESIS POLYKETIDE SYNTHASE TYPE I PKS1-RELATED"/>
    <property type="match status" value="1"/>
</dbReference>
<dbReference type="Pfam" id="PF00698">
    <property type="entry name" value="Acyl_transf_1"/>
    <property type="match status" value="1"/>
</dbReference>
<dbReference type="Pfam" id="PF00501">
    <property type="entry name" value="AMP-binding"/>
    <property type="match status" value="1"/>
</dbReference>
<dbReference type="Pfam" id="PF13193">
    <property type="entry name" value="AMP-binding_C"/>
    <property type="match status" value="1"/>
</dbReference>
<dbReference type="Pfam" id="PF16197">
    <property type="entry name" value="KAsynt_C_assoc"/>
    <property type="match status" value="1"/>
</dbReference>
<dbReference type="Pfam" id="PF00109">
    <property type="entry name" value="ketoacyl-synt"/>
    <property type="match status" value="1"/>
</dbReference>
<dbReference type="Pfam" id="PF02801">
    <property type="entry name" value="Ketoacyl-synt_C"/>
    <property type="match status" value="1"/>
</dbReference>
<dbReference type="Pfam" id="PF08659">
    <property type="entry name" value="KR"/>
    <property type="match status" value="1"/>
</dbReference>
<dbReference type="Pfam" id="PF07993">
    <property type="entry name" value="NAD_binding_4"/>
    <property type="match status" value="1"/>
</dbReference>
<dbReference type="Pfam" id="PF00550">
    <property type="entry name" value="PP-binding"/>
    <property type="match status" value="2"/>
</dbReference>
<dbReference type="SMART" id="SM00827">
    <property type="entry name" value="PKS_AT"/>
    <property type="match status" value="1"/>
</dbReference>
<dbReference type="SMART" id="SM00822">
    <property type="entry name" value="PKS_KR"/>
    <property type="match status" value="1"/>
</dbReference>
<dbReference type="SMART" id="SM00825">
    <property type="entry name" value="PKS_KS"/>
    <property type="match status" value="1"/>
</dbReference>
<dbReference type="SMART" id="SM00823">
    <property type="entry name" value="PKS_PP"/>
    <property type="match status" value="2"/>
</dbReference>
<dbReference type="SUPFAM" id="SSF56801">
    <property type="entry name" value="Acetyl-CoA synthetase-like"/>
    <property type="match status" value="1"/>
</dbReference>
<dbReference type="SUPFAM" id="SSF47336">
    <property type="entry name" value="ACP-like"/>
    <property type="match status" value="2"/>
</dbReference>
<dbReference type="SUPFAM" id="SSF52151">
    <property type="entry name" value="FabD/lysophospholipase-like"/>
    <property type="match status" value="1"/>
</dbReference>
<dbReference type="SUPFAM" id="SSF51735">
    <property type="entry name" value="NAD(P)-binding Rossmann-fold domains"/>
    <property type="match status" value="3"/>
</dbReference>
<dbReference type="SUPFAM" id="SSF55048">
    <property type="entry name" value="Probable ACP-binding domain of malonyl-CoA ACP transacylase"/>
    <property type="match status" value="1"/>
</dbReference>
<dbReference type="SUPFAM" id="SSF53901">
    <property type="entry name" value="Thiolase-like"/>
    <property type="match status" value="1"/>
</dbReference>
<dbReference type="PROSITE" id="PS00455">
    <property type="entry name" value="AMP_BINDING"/>
    <property type="match status" value="1"/>
</dbReference>
<dbReference type="PROSITE" id="PS50075">
    <property type="entry name" value="CARRIER"/>
    <property type="match status" value="2"/>
</dbReference>
<dbReference type="PROSITE" id="PS52004">
    <property type="entry name" value="KS3_2"/>
    <property type="match status" value="1"/>
</dbReference>
<dbReference type="PROSITE" id="PS00012">
    <property type="entry name" value="PHOSPHOPANTETHEINE"/>
    <property type="match status" value="1"/>
</dbReference>
<proteinExistence type="evidence at protein level"/>
<keyword id="KW-0436">Ligase</keyword>
<keyword id="KW-0489">Methyltransferase</keyword>
<keyword id="KW-0511">Multifunctional enzyme</keyword>
<keyword id="KW-0560">Oxidoreductase</keyword>
<keyword id="KW-0596">Phosphopantetheine</keyword>
<keyword id="KW-0597">Phosphoprotein</keyword>
<keyword id="KW-0808">Transferase</keyword>
<feature type="chain" id="PRO_0000441177" description="PKS-NRPS hybrid synthetase swnK">
    <location>
        <begin position="1"/>
        <end position="2488"/>
    </location>
</feature>
<feature type="domain" description="Carrier 1" evidence="2">
    <location>
        <begin position="523"/>
        <end position="598"/>
    </location>
</feature>
<feature type="domain" description="Ketosynthase family 3 (KS3)" evidence="3 9">
    <location>
        <begin position="616"/>
        <end position="1039"/>
    </location>
</feature>
<feature type="domain" description="Carrier 2" evidence="2">
    <location>
        <begin position="2002"/>
        <end position="2077"/>
    </location>
</feature>
<feature type="region of interest" description="Adenylation (A) domain" evidence="1 9">
    <location>
        <begin position="33"/>
        <end position="422"/>
    </location>
</feature>
<feature type="region of interest" description="Malonyl-CoA:ACP transacylase (MAT) domain" evidence="1 9">
    <location>
        <begin position="1149"/>
        <end position="1471"/>
    </location>
</feature>
<feature type="region of interest" description="Ketoreductase (KR) domain" evidence="1 9">
    <location>
        <begin position="1723"/>
        <end position="1901"/>
    </location>
</feature>
<feature type="region of interest" description="Disordered" evidence="4">
    <location>
        <begin position="2084"/>
        <end position="2103"/>
    </location>
</feature>
<feature type="region of interest" description="Thioester reductase (TE) domain" evidence="1 9">
    <location>
        <begin position="2136"/>
        <end position="2364"/>
    </location>
</feature>
<feature type="active site" description="For beta-ketoacyl synthase activity" evidence="3">
    <location>
        <position position="785"/>
    </location>
</feature>
<feature type="active site" description="For beta-ketoacyl synthase activity" evidence="3">
    <location>
        <position position="920"/>
    </location>
</feature>
<feature type="active site" description="For beta-ketoacyl synthase activity" evidence="3">
    <location>
        <position position="960"/>
    </location>
</feature>
<feature type="modified residue" description="O-(pantetheine 4'-phosphoryl)serine" evidence="2">
    <location>
        <position position="558"/>
    </location>
</feature>
<feature type="modified residue" description="O-(pantetheine 4'-phosphoryl)serine" evidence="2">
    <location>
        <position position="2037"/>
    </location>
</feature>
<reference key="1">
    <citation type="journal article" date="2011" name="PLoS Genet.">
        <title>Genome sequencing and comparative transcriptomics of the model entomopathogenic fungi Metarhizium anisopliae and M. acridum.</title>
        <authorList>
            <person name="Gao Q."/>
            <person name="Jin K."/>
            <person name="Ying S.-H."/>
            <person name="Zhang Y."/>
            <person name="Xiao G."/>
            <person name="Shang Y."/>
            <person name="Duan Z."/>
            <person name="Hu X."/>
            <person name="Xie X.-Q."/>
            <person name="Zhou G."/>
            <person name="Peng G."/>
            <person name="Luo Z."/>
            <person name="Huang W."/>
            <person name="Wang B."/>
            <person name="Fang W."/>
            <person name="Wang S."/>
            <person name="Zhong Y."/>
            <person name="Ma L.-J."/>
            <person name="St Leger R.J."/>
            <person name="Zhao G.-P."/>
            <person name="Pei Y."/>
            <person name="Feng M.-G."/>
            <person name="Xia Y."/>
            <person name="Wang C."/>
        </authorList>
    </citation>
    <scope>NUCLEOTIDE SEQUENCE [LARGE SCALE GENOMIC DNA]</scope>
    <source>
        <strain>ARSEF 23 / ATCC MYA-3075</strain>
    </source>
</reference>
<reference key="2">
    <citation type="journal article" date="2014" name="Proc. Natl. Acad. Sci. U.S.A.">
        <title>Trajectory and genomic determinants of fungal-pathogen speciation and host adaptation.</title>
        <authorList>
            <person name="Hu X."/>
            <person name="Xiao G."/>
            <person name="Zheng P."/>
            <person name="Shang Y."/>
            <person name="Su Y."/>
            <person name="Zhang X."/>
            <person name="Liu X."/>
            <person name="Zhan S."/>
            <person name="St Leger R.J."/>
            <person name="Wang C."/>
        </authorList>
    </citation>
    <scope>GENOME REANNOTATION</scope>
    <source>
        <strain>ARSEF 23 / ATCC MYA-3075</strain>
    </source>
</reference>
<reference key="3">
    <citation type="journal article" date="2017" name="G3 (Bethesda)">
        <title>Swainsonine biosynthesis genes in diverse symbiotic and pathogenic fungi.</title>
        <authorList>
            <person name="Cook D."/>
            <person name="Donzelli B.G."/>
            <person name="Creamer R."/>
            <person name="Baucom D.L."/>
            <person name="Gardner D.R."/>
            <person name="Pan J."/>
            <person name="Moore N."/>
            <person name="Jaromczyk J.W."/>
            <person name="Schardl C.L."/>
        </authorList>
    </citation>
    <scope>FUNCTION</scope>
    <scope>DISRUPTION PHENOTYPE</scope>
    <scope>DOMAIN</scope>
    <scope>PATHWAY</scope>
</reference>
<reference key="4">
    <citation type="journal article" date="2020" name="ACS Chem. Biol.">
        <title>Unveiling of Swainsonine Biosynthesis via a Multibranched Pathway in Fungi.</title>
        <authorList>
            <person name="Luo F."/>
            <person name="Hong S."/>
            <person name="Chen B."/>
            <person name="Yin Y."/>
            <person name="Tang G."/>
            <person name="Hu F."/>
            <person name="Zhang H."/>
            <person name="Wang C."/>
        </authorList>
    </citation>
    <scope>FUNCTION</scope>
    <scope>DOMAIN</scope>
    <scope>DISRUPTION PHENOTYPE</scope>
    <scope>CATALYTIC ACTIVITY</scope>
    <scope>PATHWAY</scope>
</reference>
<gene>
    <name evidence="7" type="primary">swnK</name>
    <name type="ORF">MAA_08622</name>
</gene>
<name>SWNK_METRA</name>
<organism>
    <name type="scientific">Metarhizium robertsii (strain ARSEF 23 / ATCC MYA-3075)</name>
    <name type="common">Metarhizium anisopliae (strain ARSEF 23)</name>
    <dbReference type="NCBI Taxonomy" id="655844"/>
    <lineage>
        <taxon>Eukaryota</taxon>
        <taxon>Fungi</taxon>
        <taxon>Dikarya</taxon>
        <taxon>Ascomycota</taxon>
        <taxon>Pezizomycotina</taxon>
        <taxon>Sordariomycetes</taxon>
        <taxon>Hypocreomycetidae</taxon>
        <taxon>Hypocreales</taxon>
        <taxon>Clavicipitaceae</taxon>
        <taxon>Metarhizium</taxon>
    </lineage>
</organism>
<accession>E9F8M3</accession>
<comment type="function">
    <text evidence="5 6 10">PKS-NRPS hybrid synthetase; part of the gene cluster that mediates the biosynthesis of swainsonine (SW), a cytotoxic fungal alkaloid and a potential cancer therapy drug (PubMed:28381497, PubMed:32786262). Swainsonine production occurs via a multibranched pathway and is dispensable for fungal colonization of plants and infection of insect hosts (PubMed:32786262). The first step of swainsonine biosynthesis is the production of the precursor pipecolic acid (PA) via conversion of L-lysine (Lys) to 1-piperideine-6-carboxylate (P6C) by the aminotransferase swnA, the latter being further reduced to PA by the reductase swnR (PubMed:32786262). PA can be converted from lysine by both the SW biosynthetic cluster and the unclustered genes such as lysine cyclodeaminase (PubMed:32786262). The PKS-NRPS hybrid synthetase swnK uptakes and condensates PA and malonyl-CoA with and without skipping of the ketoreductase (KR) domain in order to produce 3 intermediates, 1-oxoindolizidine, (1S)-1-hydroxyindolizin, and (1R)-1-hydroxyindolizine; with the transisomer (1S)-1-hydroxyindolizin being predominant (PubMed:32786262). The terminal thioester reductase (TE) domain of swnK is involved in reduction of the thioester bond to release the intermediate aldehydes (PubMed:32786262). The oxidoreductase swnN could contribute to the reduction of 1-oxoindolizidine to (1S)-1-hydroxyindolizin and (1R)-1-hydroxyindolizine, contributing to the major route of SW production (Probable). The dioxygenase swnH2 would be responsible for the oxidization of (1R)-1-hydroxyindolizine into (1R,2S)-1,2-dihydroxyindolizine and of (1S)-1-hydroxyindolizin to yield both (1R,2S)-1,2-dihydroxyindolizine and (1S,2S)-1,2-dihydroxyindolizine (PubMed:32786262). The dioxygenase swnH1 then performs the conversion of the 1,2-dihydroxyindolizine epimers to SW (PubMed:32786262).</text>
</comment>
<comment type="catalytic activity">
    <reaction evidence="6">
        <text>L-pipecolate + malonyl-CoA + 2 NADPH + 4 H(+) = (8aS)-octahydroindolizin-1-one + CO2 + 2 NADP(+) + CoA + 2 H2O</text>
        <dbReference type="Rhea" id="RHEA:65392"/>
        <dbReference type="ChEBI" id="CHEBI:15377"/>
        <dbReference type="ChEBI" id="CHEBI:15378"/>
        <dbReference type="ChEBI" id="CHEBI:16526"/>
        <dbReference type="ChEBI" id="CHEBI:57287"/>
        <dbReference type="ChEBI" id="CHEBI:57384"/>
        <dbReference type="ChEBI" id="CHEBI:57783"/>
        <dbReference type="ChEBI" id="CHEBI:58349"/>
        <dbReference type="ChEBI" id="CHEBI:61185"/>
        <dbReference type="ChEBI" id="CHEBI:167645"/>
    </reaction>
    <physiologicalReaction direction="left-to-right" evidence="6">
        <dbReference type="Rhea" id="RHEA:65393"/>
    </physiologicalReaction>
</comment>
<comment type="catalytic activity">
    <reaction evidence="6">
        <text>L-pipecolate + malonyl-CoA + 3 NADPH + 5 H(+) = (1R,8aS)-octahydroindolizin-1-ol + CO2 + 3 NADP(+) + CoA + 2 H2O</text>
        <dbReference type="Rhea" id="RHEA:67128"/>
        <dbReference type="ChEBI" id="CHEBI:15377"/>
        <dbReference type="ChEBI" id="CHEBI:15378"/>
        <dbReference type="ChEBI" id="CHEBI:16526"/>
        <dbReference type="ChEBI" id="CHEBI:57287"/>
        <dbReference type="ChEBI" id="CHEBI:57384"/>
        <dbReference type="ChEBI" id="CHEBI:57783"/>
        <dbReference type="ChEBI" id="CHEBI:58349"/>
        <dbReference type="ChEBI" id="CHEBI:61185"/>
        <dbReference type="ChEBI" id="CHEBI:167675"/>
    </reaction>
    <physiologicalReaction direction="left-to-right" evidence="6">
        <dbReference type="Rhea" id="RHEA:67129"/>
    </physiologicalReaction>
</comment>
<comment type="catalytic activity">
    <reaction evidence="6">
        <text>L-pipecolate + malonyl-CoA + 3 NADPH + 5 H(+) = (1S,8aS)-octahydroindolizin-1-ol + CO2 + 3 NADP(+) + CoA + 2 H2O</text>
        <dbReference type="Rhea" id="RHEA:67132"/>
        <dbReference type="ChEBI" id="CHEBI:15377"/>
        <dbReference type="ChEBI" id="CHEBI:15378"/>
        <dbReference type="ChEBI" id="CHEBI:16526"/>
        <dbReference type="ChEBI" id="CHEBI:57287"/>
        <dbReference type="ChEBI" id="CHEBI:57384"/>
        <dbReference type="ChEBI" id="CHEBI:57783"/>
        <dbReference type="ChEBI" id="CHEBI:58349"/>
        <dbReference type="ChEBI" id="CHEBI:61185"/>
        <dbReference type="ChEBI" id="CHEBI:167676"/>
    </reaction>
    <physiologicalReaction direction="left-to-right" evidence="6">
        <dbReference type="Rhea" id="RHEA:67133"/>
    </physiologicalReaction>
</comment>
<comment type="pathway">
    <text evidence="6">Mycotoxin biosynthesis.</text>
</comment>
<comment type="domain">
    <text evidence="9 10">The architecture of swnK is the following one: adenylation (A), phosphopantetheine-binding/thiolation (T), beta-ketoacyl synthase (KS), malonyl-CoA:ACP transacylase (MAT), ketoreductase (KR) domain, and thioester reductase (TE) domains. The presence and positions in swnK of the 2 reductase domains, ketoeductase and thioester reductase, suggests that the intermediate released from this enzyme has a hydroxyl group.</text>
</comment>
<comment type="disruption phenotype">
    <text evidence="5 6">Impairs the production of swainsonine but does not affect virulence.</text>
</comment>
<comment type="similarity">
    <text evidence="8">In the N-terminal section; belongs to the NRP synthetase family.</text>
</comment>
<sequence length="2488" mass="266926">MSGISDHDYQVLVNEFNATEDISLLGSRLDQLFEQVADRFPDNTAVIHNESEVTFKQLNSSANILARCLAKRGLQQGDVVGLAVSRSIDLIAAMLAVLKLGAAYVPIDPSFPAERINQMVEDAGLRLILLSGRPTKGLGRWASLCLSVSEARDGSVTDGTNLETEIQTRDLAYVIYTSGSTGRPKGVEISHGAAANFLSSLRKHEPGCSERDRLLAITTISFDMSALELLLPLVSGSAMIVANTSAVKDPRELISLMARHKVTILQATPATWTMLLESGWKGNPRLSKVICGGEPLSRQLADRLLAAADSVWNVYGPSETTYGSVGRVGQGDIVVGNPVANGRIYVLDDNMSPVPIGSEGEVYIGGGSVSNGYRNKAELTRSRFLVNPFHGGVFFRTGDLARFIAPGKLQVVGRIDGVVKIRGHRIDVGDIEAVLVDHANVSEAVVVSRDDRLVAYCVLHAPCHDAASLDGILRPWVAERLPAYMLPTFFVQMDALPLSPSEKVNRKALPDPIEAMQHQTMIQPTSELEQRIQAIWSDILGHDRFGIEDNFFRIGGDSVRIIRMQAALEKQLHRPVPTPKLFEHYTIKALAAYLAGTGRENNNESQAVSQTFAGSHEDIAIVSMACRLPGGVATPEALWQLLQSGGDTIIDVPKDRWDADKLYNADANIDGTSYCRRGGFLDAIYSYDASFFGISPREAQAMDPTHNLMLELCWEGFERSGYTRDQLSGSATGVFLGVSNNATTNGTPPDLKGYSITGSASATMCGRLSHTLGLRGPSLAVDTACSSSLVATHLACNALRQGECSMALAGGVSLLTTPGIHIEFSKLGGLSADGRCRAFSDDTDGTGFSEGAAIIVLKRLSDARRDGDDIHAVLRGTAVMHGGSSAGLTAPSGPGQVALLRNALARAALEPGDIDYVEAHGTATKLGDPIEATALAEVFGTERSGSDPLRIGSAKSNLGHTQAAAGVVGLLKVVLSMNHDTLPRTLHVREPMAAVDWKRTNMELVLQNRPWLPNNNRLRRAGVSAFGIGGTNAHVIVEESPPPAVEETGNITLPSLPATLPFVLSGQGDSALRAQAEKLRLHIESGAGKDSPLRDVAYSLATCRSHLHRRLVVMAGDKAETLEKLASVSSGPTQPLSVNEVGSPTVAMLFTGQGSQLPGMGKDLYAVYPVFRDALDEIAAKFTDLERPLLDIMWAESGSENAALLSRTDFAQPALFALEVSLWKLWQSWGVKPDFLLGHSVGELAAAHAAGVLDLSDACRLVMMRGRLMQAIPRQGKMASVEASSAEVSAAIQELGQHDKVEIAGYNTPLQTVISGHEEAVEATSVYMSKLGRKTKLLDTSHAFHSFHMNGMLDDLRALAQNIRFSPPKMRIISSMTGRLAGAGELERPEYWAQQARNAVRFSDAFQTLAGQGANVFLELGPSAMLCGLGAACLADPGQVGAALWLPSLKPNMNGPLVIQSSLSELHVRHVPVDWAAYFKPFDCKRVMLPTYAFQREDFRPANKASWFDVASLSTGTNDAAPRVQDMMFEINWRRVETKSIQPRGAWGLLCPSGETAWTTEAQRALLATGIQLVAVSKPHEADQLDGLLSLWDSDADTVQMAHGVTALALAQLQEAIRTGLGAPIVWVTRHAVGAGADDRPVNIGAGPLWGLMRAARSEHPELRLRLIDVDEETDRASLSQAIMLADQTEIAVRREQLLMPHMERAGLAAPLPVGQPFVRTDGAVLVTGGLGDLGSRVARRLATAHGVCDLVLVSRQGTNSPGADALVAELAELGAKATIVGCDLADLDSLGSVMQLFTPDRPLRGVVHAAGVVDSGTLSSLTPRKCAAVFAPKVDGLWNLHQLTKHMDLDLFMMFSSISGIIGLPGLGNYAAANSFIDSLAHLRRAQGLPASSVAYGTWAGDGMATTLVPTTRAHLSQLGLGFLPPEAGLEIFEHAVYQGRALTVAAVLDLQRLRAYYEEQGGVPPLLNSMLGGTKVQKPADEVVNLRDLLADAAPEQHSSIVLHMVQATIAKALGYTRAEDVDASRPMQELGIDSLTAILTRNHLATLTGMALPPNIALLYPNLKSLSEFLLCRLMDDVESSTSSPSDTDGATPSTPTSAASCVDMADIRRGVLDSTFQFNNPVSPGVPGTVFVTGATGFVGTFMIHEFLQRRISVYCLVRASGSQEAQQRMITTLKQYGLWRPEHEPLLVSVAGDLSQPLLGLGEVVFDDLASRVDAILHSGALVDWMRPLDDYIGPNVLGTHEVLRLASCGRAKAIHFISTISTLPIHAGYGLAEHDGEYGYGTSKYLAEKMVVAARFRGAKASSYRLPFVAASAASGRFRLDRGDFLNNLVTGSLDLGAFPLINADLSSVLPVDYLCGTIAAIMTEDQERVGEDYDFVNPQALTFKHFFEMMCSVSGGKEMVSFGEWHRRALEYAAAHPTSSLARIATVLDGYNDKTVGSLVSGSPVGKHVLGLDAYRAPPLDEEYVRRYVHCIEAARAKMRT</sequence>
<evidence type="ECO:0000255" key="1"/>
<evidence type="ECO:0000255" key="2">
    <source>
        <dbReference type="PROSITE-ProRule" id="PRU00258"/>
    </source>
</evidence>
<evidence type="ECO:0000255" key="3">
    <source>
        <dbReference type="PROSITE-ProRule" id="PRU01348"/>
    </source>
</evidence>
<evidence type="ECO:0000256" key="4">
    <source>
        <dbReference type="SAM" id="MobiDB-lite"/>
    </source>
</evidence>
<evidence type="ECO:0000269" key="5">
    <source>
    </source>
</evidence>
<evidence type="ECO:0000269" key="6">
    <source>
    </source>
</evidence>
<evidence type="ECO:0000303" key="7">
    <source>
    </source>
</evidence>
<evidence type="ECO:0000305" key="8"/>
<evidence type="ECO:0000305" key="9">
    <source>
    </source>
</evidence>
<evidence type="ECO:0000305" key="10">
    <source>
    </source>
</evidence>
<protein>
    <recommendedName>
        <fullName evidence="7">PKS-NRPS hybrid synthetase swnK</fullName>
        <ecNumber evidence="6">2.3.1.-</ecNumber>
    </recommendedName>
    <alternativeName>
        <fullName evidence="7">Swainsonine biosynthesis gene cluster protein K</fullName>
    </alternativeName>
</protein>